<proteinExistence type="inferred from homology"/>
<protein>
    <recommendedName>
        <fullName>Uncharacterized protein C211.05</fullName>
    </recommendedName>
</protein>
<feature type="chain" id="PRO_0000220762" description="Uncharacterized protein C211.05">
    <location>
        <begin position="1"/>
        <end position="85"/>
    </location>
</feature>
<gene>
    <name type="ORF">SPBC211.05</name>
</gene>
<organism>
    <name type="scientific">Schizosaccharomyces pombe (strain 972 / ATCC 24843)</name>
    <name type="common">Fission yeast</name>
    <dbReference type="NCBI Taxonomy" id="284812"/>
    <lineage>
        <taxon>Eukaryota</taxon>
        <taxon>Fungi</taxon>
        <taxon>Dikarya</taxon>
        <taxon>Ascomycota</taxon>
        <taxon>Taphrinomycotina</taxon>
        <taxon>Schizosaccharomycetes</taxon>
        <taxon>Schizosaccharomycetales</taxon>
        <taxon>Schizosaccharomycetaceae</taxon>
        <taxon>Schizosaccharomyces</taxon>
    </lineage>
</organism>
<sequence length="85" mass="9581">MADRLRSQAKLEQLQARYVGVGNAFTTKYEWMVNQHRDTLSSVVGHPPLLAYMATALGEPRVQVRKNLLEKMIMPCGPPPPSNQF</sequence>
<dbReference type="EMBL" id="CU329671">
    <property type="protein sequence ID" value="CAB75413.1"/>
    <property type="molecule type" value="Genomic_DNA"/>
</dbReference>
<dbReference type="PIR" id="T50340">
    <property type="entry name" value="T50340"/>
</dbReference>
<dbReference type="SMR" id="Q9P7R6"/>
<dbReference type="BioGRID" id="277162">
    <property type="interactions" value="22"/>
</dbReference>
<dbReference type="FunCoup" id="Q9P7R6">
    <property type="interactions" value="323"/>
</dbReference>
<dbReference type="IntAct" id="Q9P7R6">
    <property type="interactions" value="1"/>
</dbReference>
<dbReference type="STRING" id="284812.Q9P7R6"/>
<dbReference type="iPTMnet" id="Q9P7R6"/>
<dbReference type="PaxDb" id="4896-SPBC211.05.1"/>
<dbReference type="EnsemblFungi" id="SPBC211.05.1">
    <property type="protein sequence ID" value="SPBC211.05.1:pep"/>
    <property type="gene ID" value="SPBC211.05"/>
</dbReference>
<dbReference type="KEGG" id="spo:2540636"/>
<dbReference type="PomBase" id="SPBC211.05"/>
<dbReference type="VEuPathDB" id="FungiDB:SPBC211.05"/>
<dbReference type="eggNOG" id="KOG3485">
    <property type="taxonomic scope" value="Eukaryota"/>
</dbReference>
<dbReference type="HOGENOM" id="CLU_138804_4_0_1"/>
<dbReference type="InParanoid" id="Q9P7R6"/>
<dbReference type="OMA" id="YDRFNIH"/>
<dbReference type="PhylomeDB" id="Q9P7R6"/>
<dbReference type="PRO" id="PR:Q9P7R6"/>
<dbReference type="Proteomes" id="UP000002485">
    <property type="component" value="Chromosome II"/>
</dbReference>
<dbReference type="GO" id="GO:0005829">
    <property type="term" value="C:cytosol"/>
    <property type="evidence" value="ECO:0007005"/>
    <property type="project" value="PomBase"/>
</dbReference>
<dbReference type="GO" id="GO:0005634">
    <property type="term" value="C:nucleus"/>
    <property type="evidence" value="ECO:0007005"/>
    <property type="project" value="PomBase"/>
</dbReference>
<dbReference type="GO" id="GO:0071011">
    <property type="term" value="C:precatalytic spliceosome"/>
    <property type="evidence" value="ECO:0000318"/>
    <property type="project" value="GO_Central"/>
</dbReference>
<dbReference type="GO" id="GO:0005686">
    <property type="term" value="C:U2 snRNP"/>
    <property type="evidence" value="ECO:0000314"/>
    <property type="project" value="PomBase"/>
</dbReference>
<dbReference type="GO" id="GO:0045292">
    <property type="term" value="P:mRNA cis splicing, via spliceosome"/>
    <property type="evidence" value="ECO:0000269"/>
    <property type="project" value="PomBase"/>
</dbReference>
<dbReference type="GO" id="GO:0000398">
    <property type="term" value="P:mRNA splicing, via spliceosome"/>
    <property type="evidence" value="ECO:0000318"/>
    <property type="project" value="GO_Central"/>
</dbReference>
<dbReference type="InterPro" id="IPR009846">
    <property type="entry name" value="SF3b5/RDS3-10"/>
</dbReference>
<dbReference type="InterPro" id="IPR017089">
    <property type="entry name" value="Splicing_factor_3B_subunit_5"/>
</dbReference>
<dbReference type="PANTHER" id="PTHR20978">
    <property type="entry name" value="SPLICING FACTOR 3B SUBUNIT 5"/>
    <property type="match status" value="1"/>
</dbReference>
<dbReference type="PANTHER" id="PTHR20978:SF0">
    <property type="entry name" value="SPLICING FACTOR 3B SUBUNIT 5"/>
    <property type="match status" value="1"/>
</dbReference>
<dbReference type="Pfam" id="PF07189">
    <property type="entry name" value="SF3b10"/>
    <property type="match status" value="1"/>
</dbReference>
<dbReference type="PIRSF" id="PIRSF037010">
    <property type="entry name" value="Splicing_factor_3B_subunit_5"/>
    <property type="match status" value="1"/>
</dbReference>
<reference key="1">
    <citation type="journal article" date="2002" name="Nature">
        <title>The genome sequence of Schizosaccharomyces pombe.</title>
        <authorList>
            <person name="Wood V."/>
            <person name="Gwilliam R."/>
            <person name="Rajandream M.A."/>
            <person name="Lyne M.H."/>
            <person name="Lyne R."/>
            <person name="Stewart A."/>
            <person name="Sgouros J.G."/>
            <person name="Peat N."/>
            <person name="Hayles J."/>
            <person name="Baker S.G."/>
            <person name="Basham D."/>
            <person name="Bowman S."/>
            <person name="Brooks K."/>
            <person name="Brown D."/>
            <person name="Brown S."/>
            <person name="Chillingworth T."/>
            <person name="Churcher C.M."/>
            <person name="Collins M."/>
            <person name="Connor R."/>
            <person name="Cronin A."/>
            <person name="Davis P."/>
            <person name="Feltwell T."/>
            <person name="Fraser A."/>
            <person name="Gentles S."/>
            <person name="Goble A."/>
            <person name="Hamlin N."/>
            <person name="Harris D.E."/>
            <person name="Hidalgo J."/>
            <person name="Hodgson G."/>
            <person name="Holroyd S."/>
            <person name="Hornsby T."/>
            <person name="Howarth S."/>
            <person name="Huckle E.J."/>
            <person name="Hunt S."/>
            <person name="Jagels K."/>
            <person name="James K.D."/>
            <person name="Jones L."/>
            <person name="Jones M."/>
            <person name="Leather S."/>
            <person name="McDonald S."/>
            <person name="McLean J."/>
            <person name="Mooney P."/>
            <person name="Moule S."/>
            <person name="Mungall K.L."/>
            <person name="Murphy L.D."/>
            <person name="Niblett D."/>
            <person name="Odell C."/>
            <person name="Oliver K."/>
            <person name="O'Neil S."/>
            <person name="Pearson D."/>
            <person name="Quail M.A."/>
            <person name="Rabbinowitsch E."/>
            <person name="Rutherford K.M."/>
            <person name="Rutter S."/>
            <person name="Saunders D."/>
            <person name="Seeger K."/>
            <person name="Sharp S."/>
            <person name="Skelton J."/>
            <person name="Simmonds M.N."/>
            <person name="Squares R."/>
            <person name="Squares S."/>
            <person name="Stevens K."/>
            <person name="Taylor K."/>
            <person name="Taylor R.G."/>
            <person name="Tivey A."/>
            <person name="Walsh S.V."/>
            <person name="Warren T."/>
            <person name="Whitehead S."/>
            <person name="Woodward J.R."/>
            <person name="Volckaert G."/>
            <person name="Aert R."/>
            <person name="Robben J."/>
            <person name="Grymonprez B."/>
            <person name="Weltjens I."/>
            <person name="Vanstreels E."/>
            <person name="Rieger M."/>
            <person name="Schaefer M."/>
            <person name="Mueller-Auer S."/>
            <person name="Gabel C."/>
            <person name="Fuchs M."/>
            <person name="Duesterhoeft A."/>
            <person name="Fritzc C."/>
            <person name="Holzer E."/>
            <person name="Moestl D."/>
            <person name="Hilbert H."/>
            <person name="Borzym K."/>
            <person name="Langer I."/>
            <person name="Beck A."/>
            <person name="Lehrach H."/>
            <person name="Reinhardt R."/>
            <person name="Pohl T.M."/>
            <person name="Eger P."/>
            <person name="Zimmermann W."/>
            <person name="Wedler H."/>
            <person name="Wambutt R."/>
            <person name="Purnelle B."/>
            <person name="Goffeau A."/>
            <person name="Cadieu E."/>
            <person name="Dreano S."/>
            <person name="Gloux S."/>
            <person name="Lelaure V."/>
            <person name="Mottier S."/>
            <person name="Galibert F."/>
            <person name="Aves S.J."/>
            <person name="Xiang Z."/>
            <person name="Hunt C."/>
            <person name="Moore K."/>
            <person name="Hurst S.M."/>
            <person name="Lucas M."/>
            <person name="Rochet M."/>
            <person name="Gaillardin C."/>
            <person name="Tallada V.A."/>
            <person name="Garzon A."/>
            <person name="Thode G."/>
            <person name="Daga R.R."/>
            <person name="Cruzado L."/>
            <person name="Jimenez J."/>
            <person name="Sanchez M."/>
            <person name="del Rey F."/>
            <person name="Benito J."/>
            <person name="Dominguez A."/>
            <person name="Revuelta J.L."/>
            <person name="Moreno S."/>
            <person name="Armstrong J."/>
            <person name="Forsburg S.L."/>
            <person name="Cerutti L."/>
            <person name="Lowe T."/>
            <person name="McCombie W.R."/>
            <person name="Paulsen I."/>
            <person name="Potashkin J."/>
            <person name="Shpakovski G.V."/>
            <person name="Ussery D."/>
            <person name="Barrell B.G."/>
            <person name="Nurse P."/>
        </authorList>
    </citation>
    <scope>NUCLEOTIDE SEQUENCE [LARGE SCALE GENOMIC DNA]</scope>
    <source>
        <strain>972 / ATCC 24843</strain>
    </source>
</reference>
<comment type="similarity">
    <text evidence="1">Belongs to the SF3B5 family.</text>
</comment>
<evidence type="ECO:0000305" key="1"/>
<accession>Q9P7R6</accession>
<name>YHV5_SCHPO</name>
<keyword id="KW-1185">Reference proteome</keyword>